<name>PYRH_STAMF</name>
<sequence>MSNTLVIKITGKLFDTNASLIKKYVEIFKDLSGKYKLAIITGGGGLARKYIGYAREIGVSSNYWLDMIGIRSAQLNAYLLISSLYPKAYPEPVNNLEELLRIMNNYEIAVLGGLIPGQSTSSVALEVAEALGVSKVIDYSAIDKVYDKDPLKYPDAKPYDKISIAKLREILRQKQLPGEYALIDLRALDIAERSKITIIITHYKKPNTIYDILRGENPGTIIYP</sequence>
<keyword id="KW-0067">ATP-binding</keyword>
<keyword id="KW-0963">Cytoplasm</keyword>
<keyword id="KW-0418">Kinase</keyword>
<keyword id="KW-0547">Nucleotide-binding</keyword>
<keyword id="KW-0665">Pyrimidine biosynthesis</keyword>
<keyword id="KW-1185">Reference proteome</keyword>
<keyword id="KW-0808">Transferase</keyword>
<reference key="1">
    <citation type="journal article" date="2009" name="BMC Genomics">
        <title>The complete genome sequence of Staphylothermus marinus reveals differences in sulfur metabolism among heterotrophic Crenarchaeota.</title>
        <authorList>
            <person name="Anderson I.J."/>
            <person name="Dharmarajan L."/>
            <person name="Rodriguez J."/>
            <person name="Hooper S."/>
            <person name="Porat I."/>
            <person name="Ulrich L.E."/>
            <person name="Elkins J.G."/>
            <person name="Mavromatis K."/>
            <person name="Sun H."/>
            <person name="Land M."/>
            <person name="Lapidus A."/>
            <person name="Lucas S."/>
            <person name="Barry K."/>
            <person name="Huber H."/>
            <person name="Zhulin I.B."/>
            <person name="Whitman W.B."/>
            <person name="Mukhopadhyay B."/>
            <person name="Woese C."/>
            <person name="Bristow J."/>
            <person name="Kyrpides N."/>
        </authorList>
    </citation>
    <scope>NUCLEOTIDE SEQUENCE [LARGE SCALE GENOMIC DNA]</scope>
    <source>
        <strain>ATCC 43588 / DSM 3639 / JCM 9404 / F1</strain>
    </source>
</reference>
<reference key="2">
    <citation type="journal article" date="2009" name="Stand. Genomic Sci.">
        <title>Complete genome sequence of Staphylothermus marinus Stetter and Fiala 1986 type strain F1.</title>
        <authorList>
            <person name="Anderson I.J."/>
            <person name="Sun H."/>
            <person name="Lapidus A."/>
            <person name="Copeland A."/>
            <person name="Glavina Del Rio T."/>
            <person name="Tice H."/>
            <person name="Dalin E."/>
            <person name="Lucas S."/>
            <person name="Barry K."/>
            <person name="Land M."/>
            <person name="Richardson P."/>
            <person name="Huber H."/>
            <person name="Kyrpides N.C."/>
        </authorList>
    </citation>
    <scope>NUCLEOTIDE SEQUENCE [LARGE SCALE GENOMIC DNA]</scope>
    <source>
        <strain>ATCC 43588 / DSM 3639 / JCM 9404 / F1</strain>
    </source>
</reference>
<feature type="chain" id="PRO_0000323996" description="Uridylate kinase">
    <location>
        <begin position="1"/>
        <end position="224"/>
    </location>
</feature>
<feature type="binding site" evidence="1">
    <location>
        <begin position="8"/>
        <end position="12"/>
    </location>
    <ligand>
        <name>ATP</name>
        <dbReference type="ChEBI" id="CHEBI:30616"/>
    </ligand>
</feature>
<feature type="binding site" evidence="1">
    <location>
        <position position="43"/>
    </location>
    <ligand>
        <name>UMP</name>
        <dbReference type="ChEBI" id="CHEBI:57865"/>
    </ligand>
</feature>
<feature type="binding site" evidence="1">
    <location>
        <position position="44"/>
    </location>
    <ligand>
        <name>ATP</name>
        <dbReference type="ChEBI" id="CHEBI:30616"/>
    </ligand>
</feature>
<feature type="binding site" evidence="1">
    <location>
        <position position="48"/>
    </location>
    <ligand>
        <name>ATP</name>
        <dbReference type="ChEBI" id="CHEBI:30616"/>
    </ligand>
</feature>
<feature type="binding site" evidence="1">
    <location>
        <position position="66"/>
    </location>
    <ligand>
        <name>UMP</name>
        <dbReference type="ChEBI" id="CHEBI:57865"/>
    </ligand>
</feature>
<feature type="binding site" evidence="1">
    <location>
        <begin position="114"/>
        <end position="120"/>
    </location>
    <ligand>
        <name>UMP</name>
        <dbReference type="ChEBI" id="CHEBI:57865"/>
    </ligand>
</feature>
<feature type="binding site" evidence="1">
    <location>
        <position position="140"/>
    </location>
    <ligand>
        <name>ATP</name>
        <dbReference type="ChEBI" id="CHEBI:30616"/>
    </ligand>
</feature>
<feature type="binding site" evidence="1">
    <location>
        <position position="146"/>
    </location>
    <ligand>
        <name>ATP</name>
        <dbReference type="ChEBI" id="CHEBI:30616"/>
    </ligand>
</feature>
<feature type="binding site" evidence="1">
    <location>
        <position position="149"/>
    </location>
    <ligand>
        <name>ATP</name>
        <dbReference type="ChEBI" id="CHEBI:30616"/>
    </ligand>
</feature>
<comment type="function">
    <text evidence="1">Catalyzes the reversible phosphorylation of UMP to UDP.</text>
</comment>
<comment type="catalytic activity">
    <reaction evidence="1">
        <text>UMP + ATP = UDP + ADP</text>
        <dbReference type="Rhea" id="RHEA:24400"/>
        <dbReference type="ChEBI" id="CHEBI:30616"/>
        <dbReference type="ChEBI" id="CHEBI:57865"/>
        <dbReference type="ChEBI" id="CHEBI:58223"/>
        <dbReference type="ChEBI" id="CHEBI:456216"/>
        <dbReference type="EC" id="2.7.4.22"/>
    </reaction>
</comment>
<comment type="activity regulation">
    <text evidence="1">Inhibited by UTP.</text>
</comment>
<comment type="pathway">
    <text evidence="1">Pyrimidine metabolism; CTP biosynthesis via de novo pathway; UDP from UMP (UMPK route): step 1/1.</text>
</comment>
<comment type="subunit">
    <text evidence="1">Homohexamer.</text>
</comment>
<comment type="subcellular location">
    <subcellularLocation>
        <location evidence="1">Cytoplasm</location>
    </subcellularLocation>
</comment>
<comment type="similarity">
    <text evidence="1">Belongs to the UMP kinase family.</text>
</comment>
<evidence type="ECO:0000255" key="1">
    <source>
        <dbReference type="HAMAP-Rule" id="MF_01220"/>
    </source>
</evidence>
<organism>
    <name type="scientific">Staphylothermus marinus (strain ATCC 43588 / DSM 3639 / JCM 9404 / F1)</name>
    <dbReference type="NCBI Taxonomy" id="399550"/>
    <lineage>
        <taxon>Archaea</taxon>
        <taxon>Thermoproteota</taxon>
        <taxon>Thermoprotei</taxon>
        <taxon>Desulfurococcales</taxon>
        <taxon>Desulfurococcaceae</taxon>
        <taxon>Staphylothermus</taxon>
    </lineage>
</organism>
<gene>
    <name evidence="1" type="primary">pyrH</name>
    <name type="ordered locus">Smar_0781</name>
</gene>
<accession>A3DMM2</accession>
<proteinExistence type="inferred from homology"/>
<protein>
    <recommendedName>
        <fullName evidence="1">Uridylate kinase</fullName>
        <shortName evidence="1">UK</shortName>
        <ecNumber evidence="1">2.7.4.22</ecNumber>
    </recommendedName>
    <alternativeName>
        <fullName evidence="1">Uridine monophosphate kinase</fullName>
        <shortName evidence="1">UMP kinase</shortName>
        <shortName evidence="1">UMPK</shortName>
    </alternativeName>
</protein>
<dbReference type="EC" id="2.7.4.22" evidence="1"/>
<dbReference type="EMBL" id="CP000575">
    <property type="protein sequence ID" value="ABN69882.1"/>
    <property type="molecule type" value="Genomic_DNA"/>
</dbReference>
<dbReference type="RefSeq" id="WP_011839073.1">
    <property type="nucleotide sequence ID" value="NC_009033.1"/>
</dbReference>
<dbReference type="SMR" id="A3DMM2"/>
<dbReference type="STRING" id="399550.Smar_0781"/>
<dbReference type="GeneID" id="4908003"/>
<dbReference type="KEGG" id="smr:Smar_0781"/>
<dbReference type="eggNOG" id="arCOG00858">
    <property type="taxonomic scope" value="Archaea"/>
</dbReference>
<dbReference type="HOGENOM" id="CLU_079546_0_0_2"/>
<dbReference type="OrthoDB" id="372251at2157"/>
<dbReference type="UniPathway" id="UPA00159">
    <property type="reaction ID" value="UER00275"/>
</dbReference>
<dbReference type="Proteomes" id="UP000000254">
    <property type="component" value="Chromosome"/>
</dbReference>
<dbReference type="GO" id="GO:0005737">
    <property type="term" value="C:cytoplasm"/>
    <property type="evidence" value="ECO:0007669"/>
    <property type="project" value="UniProtKB-SubCell"/>
</dbReference>
<dbReference type="GO" id="GO:0005524">
    <property type="term" value="F:ATP binding"/>
    <property type="evidence" value="ECO:0007669"/>
    <property type="project" value="UniProtKB-KW"/>
</dbReference>
<dbReference type="GO" id="GO:0033862">
    <property type="term" value="F:UMP kinase activity"/>
    <property type="evidence" value="ECO:0007669"/>
    <property type="project" value="UniProtKB-EC"/>
</dbReference>
<dbReference type="GO" id="GO:0044210">
    <property type="term" value="P:'de novo' CTP biosynthetic process"/>
    <property type="evidence" value="ECO:0007669"/>
    <property type="project" value="UniProtKB-UniRule"/>
</dbReference>
<dbReference type="GO" id="GO:0006225">
    <property type="term" value="P:UDP biosynthetic process"/>
    <property type="evidence" value="ECO:0007669"/>
    <property type="project" value="TreeGrafter"/>
</dbReference>
<dbReference type="Gene3D" id="3.40.1160.10">
    <property type="entry name" value="Acetylglutamate kinase-like"/>
    <property type="match status" value="1"/>
</dbReference>
<dbReference type="HAMAP" id="MF_01220_A">
    <property type="entry name" value="PyrH_A"/>
    <property type="match status" value="1"/>
</dbReference>
<dbReference type="InterPro" id="IPR036393">
    <property type="entry name" value="AceGlu_kinase-like_sf"/>
</dbReference>
<dbReference type="InterPro" id="IPR001048">
    <property type="entry name" value="Asp/Glu/Uridylate_kinase"/>
</dbReference>
<dbReference type="InterPro" id="IPR011818">
    <property type="entry name" value="Uridylate_kinase_arch/spir"/>
</dbReference>
<dbReference type="NCBIfam" id="TIGR02076">
    <property type="entry name" value="pyrH_arch"/>
    <property type="match status" value="1"/>
</dbReference>
<dbReference type="PANTHER" id="PTHR42833">
    <property type="entry name" value="URIDYLATE KINASE"/>
    <property type="match status" value="1"/>
</dbReference>
<dbReference type="PANTHER" id="PTHR42833:SF4">
    <property type="entry name" value="URIDYLATE KINASE PUMPKIN, CHLOROPLASTIC"/>
    <property type="match status" value="1"/>
</dbReference>
<dbReference type="Pfam" id="PF00696">
    <property type="entry name" value="AA_kinase"/>
    <property type="match status" value="1"/>
</dbReference>
<dbReference type="SUPFAM" id="SSF53633">
    <property type="entry name" value="Carbamate kinase-like"/>
    <property type="match status" value="1"/>
</dbReference>